<name>DNAA_LACH4</name>
<comment type="function">
    <text evidence="1">Plays an essential role in the initiation and regulation of chromosomal replication. ATP-DnaA binds to the origin of replication (oriC) to initiate formation of the DNA replication initiation complex once per cell cycle. Binds the DnaA box (a 9 base pair repeat at the origin) and separates the double-stranded (ds)DNA. Forms a right-handed helical filament on oriC DNA; dsDNA binds to the exterior of the filament while single-stranded (ss)DNA is stabiized in the filament's interior. The ATP-DnaA-oriC complex binds and stabilizes one strand of the AT-rich DNA unwinding element (DUE), permitting loading of DNA polymerase. After initiation quickly degrades to an ADP-DnaA complex that is not apt for DNA replication. Binds acidic phospholipids.</text>
</comment>
<comment type="subunit">
    <text evidence="1">Oligomerizes as a right-handed, spiral filament on DNA at oriC.</text>
</comment>
<comment type="subcellular location">
    <subcellularLocation>
        <location evidence="1">Cytoplasm</location>
    </subcellularLocation>
</comment>
<comment type="domain">
    <text evidence="1">Domain I is involved in oligomerization and binding regulators, domain II is flexibile and of varying length in different bacteria, domain III forms the AAA+ region, while domain IV binds dsDNA.</text>
</comment>
<comment type="similarity">
    <text evidence="1">Belongs to the DnaA family.</text>
</comment>
<evidence type="ECO:0000255" key="1">
    <source>
        <dbReference type="HAMAP-Rule" id="MF_00377"/>
    </source>
</evidence>
<feature type="chain" id="PRO_1000072157" description="Chromosomal replication initiator protein DnaA">
    <location>
        <begin position="1"/>
        <end position="455"/>
    </location>
</feature>
<feature type="region of interest" description="Domain I, interacts with DnaA modulators" evidence="1">
    <location>
        <begin position="1"/>
        <end position="74"/>
    </location>
</feature>
<feature type="region of interest" description="Domain II" evidence="1">
    <location>
        <begin position="74"/>
        <end position="117"/>
    </location>
</feature>
<feature type="region of interest" description="Domain III, AAA+ region" evidence="1">
    <location>
        <begin position="118"/>
        <end position="334"/>
    </location>
</feature>
<feature type="region of interest" description="Domain IV, binds dsDNA" evidence="1">
    <location>
        <begin position="335"/>
        <end position="455"/>
    </location>
</feature>
<feature type="binding site" evidence="1">
    <location>
        <position position="162"/>
    </location>
    <ligand>
        <name>ATP</name>
        <dbReference type="ChEBI" id="CHEBI:30616"/>
    </ligand>
</feature>
<feature type="binding site" evidence="1">
    <location>
        <position position="164"/>
    </location>
    <ligand>
        <name>ATP</name>
        <dbReference type="ChEBI" id="CHEBI:30616"/>
    </ligand>
</feature>
<feature type="binding site" evidence="1">
    <location>
        <position position="165"/>
    </location>
    <ligand>
        <name>ATP</name>
        <dbReference type="ChEBI" id="CHEBI:30616"/>
    </ligand>
</feature>
<feature type="binding site" evidence="1">
    <location>
        <position position="166"/>
    </location>
    <ligand>
        <name>ATP</name>
        <dbReference type="ChEBI" id="CHEBI:30616"/>
    </ligand>
</feature>
<organism>
    <name type="scientific">Lactobacillus helveticus (strain DPC 4571)</name>
    <dbReference type="NCBI Taxonomy" id="405566"/>
    <lineage>
        <taxon>Bacteria</taxon>
        <taxon>Bacillati</taxon>
        <taxon>Bacillota</taxon>
        <taxon>Bacilli</taxon>
        <taxon>Lactobacillales</taxon>
        <taxon>Lactobacillaceae</taxon>
        <taxon>Lactobacillus</taxon>
    </lineage>
</organism>
<proteinExistence type="inferred from homology"/>
<sequence>MFDIEKFWQHFNDEMRARFNEVAYNAWFKNTKPIFYNKNTHELKILVQNPVAKGYWEKNLSSQLIQSAYGYAGIEILPVFQINENNDSPERIVTPEPRYAIQLQQEKRAHKQFTKNLKLNEKYTFDNFVQGEGNKLAAGAALAVADSPGSFYNPLFIFGGVGLGKTHLMQAIGHQMLAERPNAKVVYIQSETFVNDFINSIKNKTQDQFREKYRTCDLLLVDDIQFFAKKEGIQEEFFHTFETLYNDQKQIVMTSDRLPTEIPDLSERLVSRFTWGLQVEITPPDLETRIAILRRKAEAEGLVIDDNTLDYIASQVDTNIRELEGALVKVQAYATIERADINVNLAREALVDLKLVQKNRGLQISKIQEVVANYFQTSTAELKGKKRVRQIVVPRQIAMYLSRELTDASLPKIGQEFGGKDHTTVMHAYDKIDKQIKTDTEIKSAVFDLKQMIEH</sequence>
<protein>
    <recommendedName>
        <fullName evidence="1">Chromosomal replication initiator protein DnaA</fullName>
    </recommendedName>
</protein>
<reference key="1">
    <citation type="journal article" date="2008" name="J. Bacteriol.">
        <title>Genome sequence of Lactobacillus helveticus: an organism distinguished by selective gene loss and IS element expansion.</title>
        <authorList>
            <person name="Callanan M."/>
            <person name="Kaleta P."/>
            <person name="O'Callaghan J."/>
            <person name="O'Sullivan O."/>
            <person name="Jordan K."/>
            <person name="McAuliffe O."/>
            <person name="Sangrador-Vegas A."/>
            <person name="Slattery L."/>
            <person name="Fitzgerald G.F."/>
            <person name="Beresford T."/>
            <person name="Ross R.P."/>
        </authorList>
    </citation>
    <scope>NUCLEOTIDE SEQUENCE [LARGE SCALE GENOMIC DNA]</scope>
    <source>
        <strain>DPC 4571</strain>
    </source>
</reference>
<dbReference type="EMBL" id="CP000517">
    <property type="protein sequence ID" value="ABX26298.1"/>
    <property type="molecule type" value="Genomic_DNA"/>
</dbReference>
<dbReference type="RefSeq" id="WP_012211193.1">
    <property type="nucleotide sequence ID" value="NC_010080.1"/>
</dbReference>
<dbReference type="SMR" id="A8YW41"/>
<dbReference type="KEGG" id="lhe:lhv_0001"/>
<dbReference type="eggNOG" id="COG0593">
    <property type="taxonomic scope" value="Bacteria"/>
</dbReference>
<dbReference type="HOGENOM" id="CLU_026910_3_1_9"/>
<dbReference type="Proteomes" id="UP000000790">
    <property type="component" value="Chromosome"/>
</dbReference>
<dbReference type="GO" id="GO:0005737">
    <property type="term" value="C:cytoplasm"/>
    <property type="evidence" value="ECO:0007669"/>
    <property type="project" value="UniProtKB-SubCell"/>
</dbReference>
<dbReference type="GO" id="GO:0005886">
    <property type="term" value="C:plasma membrane"/>
    <property type="evidence" value="ECO:0007669"/>
    <property type="project" value="TreeGrafter"/>
</dbReference>
<dbReference type="GO" id="GO:0005524">
    <property type="term" value="F:ATP binding"/>
    <property type="evidence" value="ECO:0007669"/>
    <property type="project" value="UniProtKB-UniRule"/>
</dbReference>
<dbReference type="GO" id="GO:0016887">
    <property type="term" value="F:ATP hydrolysis activity"/>
    <property type="evidence" value="ECO:0007669"/>
    <property type="project" value="InterPro"/>
</dbReference>
<dbReference type="GO" id="GO:0003688">
    <property type="term" value="F:DNA replication origin binding"/>
    <property type="evidence" value="ECO:0007669"/>
    <property type="project" value="UniProtKB-UniRule"/>
</dbReference>
<dbReference type="GO" id="GO:0008289">
    <property type="term" value="F:lipid binding"/>
    <property type="evidence" value="ECO:0007669"/>
    <property type="project" value="UniProtKB-KW"/>
</dbReference>
<dbReference type="GO" id="GO:0006270">
    <property type="term" value="P:DNA replication initiation"/>
    <property type="evidence" value="ECO:0007669"/>
    <property type="project" value="UniProtKB-UniRule"/>
</dbReference>
<dbReference type="GO" id="GO:0006275">
    <property type="term" value="P:regulation of DNA replication"/>
    <property type="evidence" value="ECO:0007669"/>
    <property type="project" value="UniProtKB-UniRule"/>
</dbReference>
<dbReference type="CDD" id="cd00009">
    <property type="entry name" value="AAA"/>
    <property type="match status" value="1"/>
</dbReference>
<dbReference type="CDD" id="cd06571">
    <property type="entry name" value="Bac_DnaA_C"/>
    <property type="match status" value="1"/>
</dbReference>
<dbReference type="FunFam" id="1.10.1750.10:FF:000002">
    <property type="entry name" value="Chromosomal replication initiator protein DnaA"/>
    <property type="match status" value="1"/>
</dbReference>
<dbReference type="FunFam" id="3.40.50.300:FF:000668">
    <property type="entry name" value="Chromosomal replication initiator protein DnaA"/>
    <property type="match status" value="1"/>
</dbReference>
<dbReference type="Gene3D" id="1.10.1750.10">
    <property type="match status" value="1"/>
</dbReference>
<dbReference type="Gene3D" id="1.10.8.60">
    <property type="match status" value="1"/>
</dbReference>
<dbReference type="Gene3D" id="3.30.300.180">
    <property type="match status" value="1"/>
</dbReference>
<dbReference type="Gene3D" id="3.40.50.300">
    <property type="entry name" value="P-loop containing nucleotide triphosphate hydrolases"/>
    <property type="match status" value="1"/>
</dbReference>
<dbReference type="HAMAP" id="MF_00377">
    <property type="entry name" value="DnaA_bact"/>
    <property type="match status" value="1"/>
</dbReference>
<dbReference type="InterPro" id="IPR003593">
    <property type="entry name" value="AAA+_ATPase"/>
</dbReference>
<dbReference type="InterPro" id="IPR001957">
    <property type="entry name" value="Chromosome_initiator_DnaA"/>
</dbReference>
<dbReference type="InterPro" id="IPR020591">
    <property type="entry name" value="Chromosome_initiator_DnaA-like"/>
</dbReference>
<dbReference type="InterPro" id="IPR018312">
    <property type="entry name" value="Chromosome_initiator_DnaA_CS"/>
</dbReference>
<dbReference type="InterPro" id="IPR013159">
    <property type="entry name" value="DnaA_C"/>
</dbReference>
<dbReference type="InterPro" id="IPR013317">
    <property type="entry name" value="DnaA_dom"/>
</dbReference>
<dbReference type="InterPro" id="IPR038454">
    <property type="entry name" value="DnaA_N_sf"/>
</dbReference>
<dbReference type="InterPro" id="IPR027417">
    <property type="entry name" value="P-loop_NTPase"/>
</dbReference>
<dbReference type="InterPro" id="IPR010921">
    <property type="entry name" value="Trp_repressor/repl_initiator"/>
</dbReference>
<dbReference type="NCBIfam" id="TIGR00362">
    <property type="entry name" value="DnaA"/>
    <property type="match status" value="1"/>
</dbReference>
<dbReference type="PANTHER" id="PTHR30050">
    <property type="entry name" value="CHROMOSOMAL REPLICATION INITIATOR PROTEIN DNAA"/>
    <property type="match status" value="1"/>
</dbReference>
<dbReference type="PANTHER" id="PTHR30050:SF2">
    <property type="entry name" value="CHROMOSOMAL REPLICATION INITIATOR PROTEIN DNAA"/>
    <property type="match status" value="1"/>
</dbReference>
<dbReference type="Pfam" id="PF00308">
    <property type="entry name" value="Bac_DnaA"/>
    <property type="match status" value="1"/>
</dbReference>
<dbReference type="Pfam" id="PF08299">
    <property type="entry name" value="Bac_DnaA_C"/>
    <property type="match status" value="1"/>
</dbReference>
<dbReference type="PRINTS" id="PR00051">
    <property type="entry name" value="DNAA"/>
</dbReference>
<dbReference type="SMART" id="SM00382">
    <property type="entry name" value="AAA"/>
    <property type="match status" value="1"/>
</dbReference>
<dbReference type="SMART" id="SM00760">
    <property type="entry name" value="Bac_DnaA_C"/>
    <property type="match status" value="1"/>
</dbReference>
<dbReference type="SUPFAM" id="SSF52540">
    <property type="entry name" value="P-loop containing nucleoside triphosphate hydrolases"/>
    <property type="match status" value="1"/>
</dbReference>
<dbReference type="SUPFAM" id="SSF48295">
    <property type="entry name" value="TrpR-like"/>
    <property type="match status" value="1"/>
</dbReference>
<dbReference type="PROSITE" id="PS01008">
    <property type="entry name" value="DNAA"/>
    <property type="match status" value="1"/>
</dbReference>
<keyword id="KW-0067">ATP-binding</keyword>
<keyword id="KW-0963">Cytoplasm</keyword>
<keyword id="KW-0235">DNA replication</keyword>
<keyword id="KW-0238">DNA-binding</keyword>
<keyword id="KW-0446">Lipid-binding</keyword>
<keyword id="KW-0547">Nucleotide-binding</keyword>
<gene>
    <name evidence="1" type="primary">dnaA</name>
    <name type="ordered locus">lhv_0001</name>
</gene>
<accession>A8YW41</accession>